<sequence>MDKKVINDKFTEIFGEQAEATFFSPGRINLIGEHTDYNGGHVFPCAISLGTYGAARKREDNKLRFYSANFEDLGIIETSLDDLKYDKKDNWVNYAKGMIYFLKETGHDVDKGMDIFIEGNIPNGSGLSSSASLEMLIGVIAQELFNLDIDRVDLVKLGMETENKFIGVNSGIMDQFAVGMGKQNQAILLDTNTLEYSYAPVDMGNNVIVIMNTNKRRELADSKYNERRSECETAVGELQAKLDIKTLGELDAQTFDEYAYLIEDENRLKRARHAVWENQRTMQAQAALEEGDLEKFGRLVNASHVSLEHDYEVTGIELDTLAHTAWKQEGVLGARMTGAGFGGCGIAIVDKDKVEAFKENVGKVYTEKIGYAPAFYIAEIADGTKVL</sequence>
<comment type="function">
    <text evidence="1">Catalyzes the transfer of the gamma-phosphate of ATP to D-galactose to form alpha-D-galactose-1-phosphate (Gal-1-P).</text>
</comment>
<comment type="catalytic activity">
    <reaction evidence="1">
        <text>alpha-D-galactose + ATP = alpha-D-galactose 1-phosphate + ADP + H(+)</text>
        <dbReference type="Rhea" id="RHEA:13553"/>
        <dbReference type="ChEBI" id="CHEBI:15378"/>
        <dbReference type="ChEBI" id="CHEBI:28061"/>
        <dbReference type="ChEBI" id="CHEBI:30616"/>
        <dbReference type="ChEBI" id="CHEBI:58336"/>
        <dbReference type="ChEBI" id="CHEBI:456216"/>
        <dbReference type="EC" id="2.7.1.6"/>
    </reaction>
</comment>
<comment type="pathway">
    <text evidence="1">Carbohydrate metabolism; galactose metabolism.</text>
</comment>
<comment type="subcellular location">
    <subcellularLocation>
        <location evidence="1">Cytoplasm</location>
    </subcellularLocation>
</comment>
<comment type="similarity">
    <text evidence="1">Belongs to the GHMP kinase family. GalK subfamily.</text>
</comment>
<keyword id="KW-0067">ATP-binding</keyword>
<keyword id="KW-0119">Carbohydrate metabolism</keyword>
<keyword id="KW-0963">Cytoplasm</keyword>
<keyword id="KW-0299">Galactose metabolism</keyword>
<keyword id="KW-0418">Kinase</keyword>
<keyword id="KW-0460">Magnesium</keyword>
<keyword id="KW-0479">Metal-binding</keyword>
<keyword id="KW-0547">Nucleotide-binding</keyword>
<keyword id="KW-1185">Reference proteome</keyword>
<keyword id="KW-0808">Transferase</keyword>
<name>GAL1_LIGS1</name>
<organism>
    <name type="scientific">Ligilactobacillus salivarius (strain UCC118)</name>
    <name type="common">Lactobacillus salivarius</name>
    <dbReference type="NCBI Taxonomy" id="362948"/>
    <lineage>
        <taxon>Bacteria</taxon>
        <taxon>Bacillati</taxon>
        <taxon>Bacillota</taxon>
        <taxon>Bacilli</taxon>
        <taxon>Lactobacillales</taxon>
        <taxon>Lactobacillaceae</taxon>
        <taxon>Ligilactobacillus</taxon>
    </lineage>
</organism>
<reference key="1">
    <citation type="journal article" date="2006" name="Proc. Natl. Acad. Sci. U.S.A.">
        <title>Multireplicon genome architecture of Lactobacillus salivarius.</title>
        <authorList>
            <person name="Claesson M.J."/>
            <person name="Li Y."/>
            <person name="Leahy S."/>
            <person name="Canchaya C."/>
            <person name="van Pijkeren J.P."/>
            <person name="Cerdeno-Tarraga A.M."/>
            <person name="Parkhill J."/>
            <person name="Flynn S."/>
            <person name="O'Sullivan G.C."/>
            <person name="Collins J.K."/>
            <person name="Higgins D."/>
            <person name="Shanahan F."/>
            <person name="Fitzgerald G.F."/>
            <person name="van Sinderen D."/>
            <person name="O'Toole P.W."/>
        </authorList>
    </citation>
    <scope>NUCLEOTIDE SEQUENCE [LARGE SCALE GENOMIC DNA]</scope>
    <source>
        <strain>UCC118</strain>
    </source>
</reference>
<accession>Q1WUZ4</accession>
<feature type="chain" id="PRO_1000005756" description="Galactokinase">
    <location>
        <begin position="1"/>
        <end position="387"/>
    </location>
</feature>
<feature type="active site" description="Proton acceptor" evidence="1">
    <location>
        <position position="174"/>
    </location>
</feature>
<feature type="binding site" evidence="1">
    <location>
        <begin position="33"/>
        <end position="36"/>
    </location>
    <ligand>
        <name>substrate</name>
    </ligand>
</feature>
<feature type="binding site" evidence="1">
    <location>
        <position position="67"/>
    </location>
    <ligand>
        <name>ATP</name>
        <dbReference type="ChEBI" id="CHEBI:30616"/>
    </ligand>
</feature>
<feature type="binding site" evidence="1">
    <location>
        <begin position="124"/>
        <end position="130"/>
    </location>
    <ligand>
        <name>ATP</name>
        <dbReference type="ChEBI" id="CHEBI:30616"/>
    </ligand>
</feature>
<feature type="binding site" evidence="1">
    <location>
        <position position="130"/>
    </location>
    <ligand>
        <name>Mg(2+)</name>
        <dbReference type="ChEBI" id="CHEBI:18420"/>
    </ligand>
</feature>
<feature type="binding site" evidence="1">
    <location>
        <position position="162"/>
    </location>
    <ligand>
        <name>Mg(2+)</name>
        <dbReference type="ChEBI" id="CHEBI:18420"/>
    </ligand>
</feature>
<feature type="binding site" evidence="1">
    <location>
        <position position="224"/>
    </location>
    <ligand>
        <name>substrate</name>
    </ligand>
</feature>
<feature type="site" description="Transition state stabilizer" evidence="1">
    <location>
        <position position="27"/>
    </location>
</feature>
<proteinExistence type="inferred from homology"/>
<dbReference type="EC" id="2.7.1.6" evidence="1"/>
<dbReference type="EMBL" id="CP000233">
    <property type="protein sequence ID" value="ABD99191.1"/>
    <property type="molecule type" value="Genomic_DNA"/>
</dbReference>
<dbReference type="RefSeq" id="WP_003704250.1">
    <property type="nucleotide sequence ID" value="NC_007929.1"/>
</dbReference>
<dbReference type="RefSeq" id="YP_535274.1">
    <property type="nucleotide sequence ID" value="NC_007929.1"/>
</dbReference>
<dbReference type="SMR" id="Q1WUZ4"/>
<dbReference type="STRING" id="362948.LSL_0381"/>
<dbReference type="KEGG" id="lsl:LSL_0381"/>
<dbReference type="PATRIC" id="fig|362948.14.peg.458"/>
<dbReference type="HOGENOM" id="CLU_017814_2_1_9"/>
<dbReference type="OrthoDB" id="250531at2"/>
<dbReference type="UniPathway" id="UPA00214"/>
<dbReference type="Proteomes" id="UP000006559">
    <property type="component" value="Chromosome"/>
</dbReference>
<dbReference type="GO" id="GO:0005829">
    <property type="term" value="C:cytosol"/>
    <property type="evidence" value="ECO:0007669"/>
    <property type="project" value="TreeGrafter"/>
</dbReference>
<dbReference type="GO" id="GO:0005524">
    <property type="term" value="F:ATP binding"/>
    <property type="evidence" value="ECO:0007669"/>
    <property type="project" value="UniProtKB-UniRule"/>
</dbReference>
<dbReference type="GO" id="GO:0004335">
    <property type="term" value="F:galactokinase activity"/>
    <property type="evidence" value="ECO:0007669"/>
    <property type="project" value="UniProtKB-UniRule"/>
</dbReference>
<dbReference type="GO" id="GO:0000287">
    <property type="term" value="F:magnesium ion binding"/>
    <property type="evidence" value="ECO:0007669"/>
    <property type="project" value="UniProtKB-UniRule"/>
</dbReference>
<dbReference type="GO" id="GO:0006012">
    <property type="term" value="P:galactose metabolic process"/>
    <property type="evidence" value="ECO:0007669"/>
    <property type="project" value="UniProtKB-UniRule"/>
</dbReference>
<dbReference type="FunFam" id="3.30.230.10:FF:000017">
    <property type="entry name" value="Galactokinase"/>
    <property type="match status" value="1"/>
</dbReference>
<dbReference type="FunFam" id="3.30.70.890:FF:000001">
    <property type="entry name" value="Galactokinase"/>
    <property type="match status" value="1"/>
</dbReference>
<dbReference type="Gene3D" id="3.30.230.10">
    <property type="match status" value="1"/>
</dbReference>
<dbReference type="Gene3D" id="3.30.70.890">
    <property type="entry name" value="GHMP kinase, C-terminal domain"/>
    <property type="match status" value="1"/>
</dbReference>
<dbReference type="HAMAP" id="MF_00246">
    <property type="entry name" value="Galactokinase"/>
    <property type="match status" value="1"/>
</dbReference>
<dbReference type="InterPro" id="IPR000705">
    <property type="entry name" value="Galactokinase"/>
</dbReference>
<dbReference type="InterPro" id="IPR022963">
    <property type="entry name" value="Galactokinase_bac"/>
</dbReference>
<dbReference type="InterPro" id="IPR019741">
    <property type="entry name" value="Galactokinase_CS"/>
</dbReference>
<dbReference type="InterPro" id="IPR019539">
    <property type="entry name" value="GalKase_N"/>
</dbReference>
<dbReference type="InterPro" id="IPR013750">
    <property type="entry name" value="GHMP_kinase_C_dom"/>
</dbReference>
<dbReference type="InterPro" id="IPR036554">
    <property type="entry name" value="GHMP_kinase_C_sf"/>
</dbReference>
<dbReference type="InterPro" id="IPR006204">
    <property type="entry name" value="GHMP_kinase_N_dom"/>
</dbReference>
<dbReference type="InterPro" id="IPR006203">
    <property type="entry name" value="GHMP_knse_ATP-bd_CS"/>
</dbReference>
<dbReference type="InterPro" id="IPR006206">
    <property type="entry name" value="Mevalonate/galactokinase"/>
</dbReference>
<dbReference type="InterPro" id="IPR020568">
    <property type="entry name" value="Ribosomal_Su5_D2-typ_SF"/>
</dbReference>
<dbReference type="InterPro" id="IPR014721">
    <property type="entry name" value="Ribsml_uS5_D2-typ_fold_subgr"/>
</dbReference>
<dbReference type="NCBIfam" id="TIGR00131">
    <property type="entry name" value="gal_kin"/>
    <property type="match status" value="1"/>
</dbReference>
<dbReference type="NCBIfam" id="NF003705">
    <property type="entry name" value="PRK05322.1"/>
    <property type="match status" value="1"/>
</dbReference>
<dbReference type="PANTHER" id="PTHR10457:SF7">
    <property type="entry name" value="GALACTOKINASE-RELATED"/>
    <property type="match status" value="1"/>
</dbReference>
<dbReference type="PANTHER" id="PTHR10457">
    <property type="entry name" value="MEVALONATE KINASE/GALACTOKINASE"/>
    <property type="match status" value="1"/>
</dbReference>
<dbReference type="Pfam" id="PF10509">
    <property type="entry name" value="GalKase_gal_bdg"/>
    <property type="match status" value="1"/>
</dbReference>
<dbReference type="Pfam" id="PF08544">
    <property type="entry name" value="GHMP_kinases_C"/>
    <property type="match status" value="1"/>
</dbReference>
<dbReference type="Pfam" id="PF00288">
    <property type="entry name" value="GHMP_kinases_N"/>
    <property type="match status" value="1"/>
</dbReference>
<dbReference type="PIRSF" id="PIRSF000530">
    <property type="entry name" value="Galactokinase"/>
    <property type="match status" value="1"/>
</dbReference>
<dbReference type="PRINTS" id="PR00473">
    <property type="entry name" value="GALCTOKINASE"/>
</dbReference>
<dbReference type="PRINTS" id="PR00959">
    <property type="entry name" value="MEVGALKINASE"/>
</dbReference>
<dbReference type="SUPFAM" id="SSF55060">
    <property type="entry name" value="GHMP Kinase, C-terminal domain"/>
    <property type="match status" value="1"/>
</dbReference>
<dbReference type="SUPFAM" id="SSF54211">
    <property type="entry name" value="Ribosomal protein S5 domain 2-like"/>
    <property type="match status" value="1"/>
</dbReference>
<dbReference type="PROSITE" id="PS00106">
    <property type="entry name" value="GALACTOKINASE"/>
    <property type="match status" value="1"/>
</dbReference>
<dbReference type="PROSITE" id="PS00627">
    <property type="entry name" value="GHMP_KINASES_ATP"/>
    <property type="match status" value="1"/>
</dbReference>
<protein>
    <recommendedName>
        <fullName evidence="1">Galactokinase</fullName>
        <ecNumber evidence="1">2.7.1.6</ecNumber>
    </recommendedName>
    <alternativeName>
        <fullName evidence="1">Galactose kinase</fullName>
    </alternativeName>
</protein>
<gene>
    <name evidence="1" type="primary">galK</name>
    <name type="ordered locus">LSL_0381</name>
</gene>
<evidence type="ECO:0000255" key="1">
    <source>
        <dbReference type="HAMAP-Rule" id="MF_00246"/>
    </source>
</evidence>